<comment type="function">
    <text evidence="2 5">Selectively catalyzes the oxidative deamination of acidic amino acids (PubMed:30937498). Protects the organism from the toxicity of D-amino acids (By similarity). Enables the organism to utilize D-amino acids as a source of nutrients (By similarity).</text>
</comment>
<comment type="catalytic activity">
    <reaction evidence="5">
        <text>D-aspartate + O2 + H2O = oxaloacetate + H2O2 + NH4(+)</text>
        <dbReference type="Rhea" id="RHEA:12512"/>
        <dbReference type="ChEBI" id="CHEBI:15377"/>
        <dbReference type="ChEBI" id="CHEBI:15379"/>
        <dbReference type="ChEBI" id="CHEBI:16240"/>
        <dbReference type="ChEBI" id="CHEBI:16452"/>
        <dbReference type="ChEBI" id="CHEBI:28938"/>
        <dbReference type="ChEBI" id="CHEBI:29990"/>
        <dbReference type="EC" id="1.4.3.1"/>
    </reaction>
    <physiologicalReaction direction="left-to-right" evidence="5">
        <dbReference type="Rhea" id="RHEA:12513"/>
    </physiologicalReaction>
</comment>
<comment type="catalytic activity">
    <reaction evidence="5">
        <text>D-glutamate + O2 + H2O = H2O2 + 2-oxoglutarate + NH4(+)</text>
        <dbReference type="Rhea" id="RHEA:10028"/>
        <dbReference type="ChEBI" id="CHEBI:15377"/>
        <dbReference type="ChEBI" id="CHEBI:15379"/>
        <dbReference type="ChEBI" id="CHEBI:16240"/>
        <dbReference type="ChEBI" id="CHEBI:16810"/>
        <dbReference type="ChEBI" id="CHEBI:28938"/>
        <dbReference type="ChEBI" id="CHEBI:29986"/>
    </reaction>
    <physiologicalReaction direction="left-to-right" evidence="5">
        <dbReference type="Rhea" id="RHEA:10029"/>
    </physiologicalReaction>
</comment>
<comment type="cofactor">
    <cofactor evidence="5">
        <name>FAD</name>
        <dbReference type="ChEBI" id="CHEBI:57692"/>
    </cofactor>
</comment>
<comment type="biophysicochemical properties">
    <kinetics>
        <KM evidence="5">8.77 mM for D-aspartate (at 60 degrees Celsius and at pH 7.5)</KM>
        <KM evidence="5">2.16 mM for D-glutamate (at 60 degrees Celsius and at pH 7.5)</KM>
        <KM evidence="5">103 mM for N-methyl D-aspartate (at 60 degrees Celsius and at pH 7.5)</KM>
        <KM evidence="5">108 mM for D-glutamine (at 60 degrees Celsius and at pH 7.5)</KM>
        <text evidence="5">kcat is 123 sec(-1) with D-aspartate as substrate (at 37 degrees Celsius and at pH 7.5) (PubMed:30937498). kcat is 217 sec(-1) with D-glutamate as substrate (at 37 degrees Celsius and at pH 7.5) (PubMed:30937498). kcat is 155 sec(-1) with N-methyl D-aspartate as substrate (at 37 degrees Celsius and at pH 7.5) (PubMed:30937498). kcat is 144 sec(-1) with D-glutamine as substrate (at 37 degrees Celsius and at pH 7.5) (PubMed:30937498).</text>
    </kinetics>
    <phDependence>
        <text evidence="5">Optimum pH is 8.</text>
    </phDependence>
    <temperatureDependence>
        <text>Optimum temperature is 60 degrees Celsius.</text>
    </temperatureDependence>
</comment>
<comment type="subunit">
    <text evidence="5">Monomer.</text>
</comment>
<comment type="similarity">
    <text evidence="7">Belongs to the DAMOX/DASOX family.</text>
</comment>
<evidence type="ECO:0000250" key="1">
    <source>
        <dbReference type="UniProtKB" id="P80324"/>
    </source>
</evidence>
<evidence type="ECO:0000250" key="2">
    <source>
        <dbReference type="UniProtKB" id="Q75WF1"/>
    </source>
</evidence>
<evidence type="ECO:0000255" key="3"/>
<evidence type="ECO:0000255" key="4">
    <source>
        <dbReference type="PROSITE-ProRule" id="PRU00498"/>
    </source>
</evidence>
<evidence type="ECO:0000269" key="5">
    <source>
    </source>
</evidence>
<evidence type="ECO:0000303" key="6">
    <source>
    </source>
</evidence>
<evidence type="ECO:0000305" key="7"/>
<feature type="signal peptide" evidence="3">
    <location>
        <begin position="1"/>
        <end position="18"/>
    </location>
</feature>
<feature type="chain" id="PRO_0000459793" description="D-aspartate oxidase" evidence="3">
    <location>
        <begin position="19"/>
        <end position="370"/>
    </location>
</feature>
<feature type="binding site" evidence="1">
    <location>
        <position position="13"/>
    </location>
    <ligand>
        <name>FAD</name>
        <dbReference type="ChEBI" id="CHEBI:57692"/>
    </ligand>
</feature>
<feature type="binding site" evidence="1">
    <location>
        <position position="42"/>
    </location>
    <ligand>
        <name>FAD</name>
        <dbReference type="ChEBI" id="CHEBI:57692"/>
    </ligand>
</feature>
<feature type="binding site" evidence="1">
    <location>
        <position position="63"/>
    </location>
    <ligand>
        <name>FAD</name>
        <dbReference type="ChEBI" id="CHEBI:57692"/>
    </ligand>
</feature>
<feature type="binding site" evidence="1">
    <location>
        <position position="64"/>
    </location>
    <ligand>
        <name>FAD</name>
        <dbReference type="ChEBI" id="CHEBI:57692"/>
    </ligand>
</feature>
<feature type="binding site" evidence="1">
    <location>
        <position position="68"/>
    </location>
    <ligand>
        <name>FAD</name>
        <dbReference type="ChEBI" id="CHEBI:57692"/>
    </ligand>
</feature>
<feature type="binding site" evidence="1">
    <location>
        <position position="308"/>
    </location>
    <ligand>
        <name>FAD</name>
        <dbReference type="ChEBI" id="CHEBI:57692"/>
    </ligand>
</feature>
<feature type="binding site" evidence="1">
    <location>
        <position position="338"/>
    </location>
    <ligand>
        <name>FAD</name>
        <dbReference type="ChEBI" id="CHEBI:57692"/>
    </ligand>
</feature>
<feature type="binding site" evidence="1">
    <location>
        <position position="339"/>
    </location>
    <ligand>
        <name>FAD</name>
        <dbReference type="ChEBI" id="CHEBI:57692"/>
    </ligand>
</feature>
<feature type="glycosylation site" description="N-linked (GlcNAc...) asparagine" evidence="4">
    <location>
        <position position="207"/>
    </location>
</feature>
<feature type="mutagenesis site" description="Increases substrate-binding." evidence="5">
    <original>F</original>
    <variation>Y</variation>
    <location>
        <position position="248"/>
    </location>
</feature>
<name>OXDD_TALTH</name>
<reference evidence="7" key="1">
    <citation type="journal article" date="2012" name="Fungal Biol.">
        <title>A molecular phylogeny of thermophilic fungi.</title>
        <authorList>
            <person name="Morgenstern I."/>
            <person name="Powlowski J."/>
            <person name="Ishmael N."/>
            <person name="Darmond C."/>
            <person name="Marqueteau S."/>
            <person name="Moisan M.C."/>
            <person name="Quenneville G."/>
            <person name="Tsang A."/>
        </authorList>
    </citation>
    <scope>NUCLEOTIDE SEQUENCE [LARGE SCALE GENOMIC DNA]</scope>
</reference>
<reference evidence="7" key="2">
    <citation type="journal article" date="2019" name="Appl. Microbiol. Biotechnol.">
        <title>Characterization and improvement of substrate-binding affinity of D-aspartate oxidase of the thermophilic fungus Thermomyces dupontii.</title>
        <authorList>
            <person name="Takahashi S."/>
            <person name="Osugi K."/>
            <person name="Shimekake Y."/>
            <person name="Shinbo A."/>
            <person name="Abe K."/>
            <person name="Kera Y."/>
        </authorList>
    </citation>
    <scope>FUNCTION</scope>
    <scope>CATALYTIC ACTIVITY</scope>
    <scope>COFACTOR</scope>
    <scope>BIOPHYSICOCHEMICAL PROPERTIES</scope>
    <scope>SUBUNIT</scope>
    <scope>MUTAGENESIS OF PHE-248</scope>
</reference>
<keyword id="KW-0274">FAD</keyword>
<keyword id="KW-0285">Flavoprotein</keyword>
<keyword id="KW-0325">Glycoprotein</keyword>
<keyword id="KW-0560">Oxidoreductase</keyword>
<keyword id="KW-0732">Signal</keyword>
<organism>
    <name type="scientific">Talaromyces thermophilus</name>
    <dbReference type="NCBI Taxonomy" id="28565"/>
    <lineage>
        <taxon>Eukaryota</taxon>
        <taxon>Fungi</taxon>
        <taxon>Dikarya</taxon>
        <taxon>Ascomycota</taxon>
        <taxon>Pezizomycotina</taxon>
        <taxon>Eurotiomycetes</taxon>
        <taxon>Eurotiomycetidae</taxon>
        <taxon>Eurotiales</taxon>
        <taxon>Trichocomaceae</taxon>
        <taxon>Thermomyces</taxon>
    </lineage>
</organism>
<sequence>MPPRIIILGAGIIGLSTAVELQQRHQHRSAEPRPSITIVSAELPSQPSEWTEDPRCRPSPDYASMWAGAHYRPIPGATPQLQREAQWAMDTFRRMRRIARDAPEAGVRMMPGIEYLEDSPKEYGRLRTGDRYAGEHDEFRVLDKAELPEGVAWGCRYQTYSLNAPHYSRWLLDRFLAGGGQIVHRKLERLEEAFTLFEDGSQPLVINCTGRNFDQDDKMRIIRGQTVLVRNQFDRTITRQNRDGSWIFLIPRPFAGTIIGGTKEPGDMEVKPRMETRLKLLENCVRAFPEFVDRLEDFDVVLDNVGRRPWRDGGLRLEEERIEDGKTVIHAYGAGGRGYELSWGIAKEVADLVLATERSKFECRVSENLK</sequence>
<proteinExistence type="evidence at protein level"/>
<protein>
    <recommendedName>
        <fullName>D-aspartate oxidase</fullName>
        <shortName evidence="7">DASOX</shortName>
        <shortName evidence="7">DASPO</shortName>
        <shortName evidence="7">DDO</shortName>
        <ecNumber evidence="5">1.4.3.1</ecNumber>
    </recommendedName>
    <alternativeName>
        <fullName evidence="6">TdDDO</fullName>
    </alternativeName>
</protein>
<dbReference type="EC" id="1.4.3.1" evidence="5"/>
<dbReference type="SMR" id="C0HMB0"/>
<dbReference type="GO" id="GO:0005782">
    <property type="term" value="C:peroxisomal matrix"/>
    <property type="evidence" value="ECO:0000250"/>
    <property type="project" value="UniProtKB"/>
</dbReference>
<dbReference type="GO" id="GO:0008445">
    <property type="term" value="F:D-aspartate oxidase activity"/>
    <property type="evidence" value="ECO:0000314"/>
    <property type="project" value="UniProtKB"/>
</dbReference>
<dbReference type="GO" id="GO:0071949">
    <property type="term" value="F:FAD binding"/>
    <property type="evidence" value="ECO:0007669"/>
    <property type="project" value="InterPro"/>
</dbReference>
<dbReference type="GO" id="GO:0019478">
    <property type="term" value="P:D-amino acid catabolic process"/>
    <property type="evidence" value="ECO:0000314"/>
    <property type="project" value="UniProtKB"/>
</dbReference>
<dbReference type="Gene3D" id="3.30.9.10">
    <property type="entry name" value="D-Amino Acid Oxidase, subunit A, domain 2"/>
    <property type="match status" value="1"/>
</dbReference>
<dbReference type="Gene3D" id="3.40.50.720">
    <property type="entry name" value="NAD(P)-binding Rossmann-like Domain"/>
    <property type="match status" value="1"/>
</dbReference>
<dbReference type="InterPro" id="IPR006181">
    <property type="entry name" value="D-amino_acid_oxidase_CS"/>
</dbReference>
<dbReference type="InterPro" id="IPR023209">
    <property type="entry name" value="DAO"/>
</dbReference>
<dbReference type="InterPro" id="IPR006076">
    <property type="entry name" value="FAD-dep_OxRdtase"/>
</dbReference>
<dbReference type="PANTHER" id="PTHR11530">
    <property type="entry name" value="D-AMINO ACID OXIDASE"/>
    <property type="match status" value="1"/>
</dbReference>
<dbReference type="PANTHER" id="PTHR11530:SF26">
    <property type="entry name" value="FAD DEPENDENT OXIDOREDUCTASE SUPERFAMILY (AFU_ORTHOLOGUE AFUA_5G13940)"/>
    <property type="match status" value="1"/>
</dbReference>
<dbReference type="Pfam" id="PF01266">
    <property type="entry name" value="DAO"/>
    <property type="match status" value="1"/>
</dbReference>
<dbReference type="PIRSF" id="PIRSF000189">
    <property type="entry name" value="D-aa_oxidase"/>
    <property type="match status" value="1"/>
</dbReference>
<dbReference type="SUPFAM" id="SSF54373">
    <property type="entry name" value="FAD-linked reductases, C-terminal domain"/>
    <property type="match status" value="1"/>
</dbReference>
<dbReference type="SUPFAM" id="SSF51971">
    <property type="entry name" value="Nucleotide-binding domain"/>
    <property type="match status" value="1"/>
</dbReference>
<accession>C0HMB0</accession>
<gene>
    <name evidence="6" type="primary">DDO</name>
    <name evidence="6" type="ordered locus">Talth1p4_002474</name>
    <name evidence="7" type="ordered locus">Talth2p7_7688</name>
</gene>